<dbReference type="EMBL" id="CP000416">
    <property type="protein sequence ID" value="ABJ64747.1"/>
    <property type="molecule type" value="Genomic_DNA"/>
</dbReference>
<dbReference type="RefSeq" id="WP_011668481.1">
    <property type="nucleotide sequence ID" value="NC_008497.1"/>
</dbReference>
<dbReference type="SMR" id="Q03PX5"/>
<dbReference type="STRING" id="387344.LVIS_1672"/>
<dbReference type="GeneID" id="56993533"/>
<dbReference type="KEGG" id="lbr:LVIS_1672"/>
<dbReference type="eggNOG" id="COG1841">
    <property type="taxonomic scope" value="Bacteria"/>
</dbReference>
<dbReference type="HOGENOM" id="CLU_131047_2_1_9"/>
<dbReference type="Proteomes" id="UP000001652">
    <property type="component" value="Chromosome"/>
</dbReference>
<dbReference type="GO" id="GO:0022625">
    <property type="term" value="C:cytosolic large ribosomal subunit"/>
    <property type="evidence" value="ECO:0007669"/>
    <property type="project" value="TreeGrafter"/>
</dbReference>
<dbReference type="GO" id="GO:0003735">
    <property type="term" value="F:structural constituent of ribosome"/>
    <property type="evidence" value="ECO:0007669"/>
    <property type="project" value="InterPro"/>
</dbReference>
<dbReference type="GO" id="GO:0006412">
    <property type="term" value="P:translation"/>
    <property type="evidence" value="ECO:0007669"/>
    <property type="project" value="UniProtKB-UniRule"/>
</dbReference>
<dbReference type="CDD" id="cd01658">
    <property type="entry name" value="Ribosomal_L30"/>
    <property type="match status" value="1"/>
</dbReference>
<dbReference type="Gene3D" id="3.30.1390.20">
    <property type="entry name" value="Ribosomal protein L30, ferredoxin-like fold domain"/>
    <property type="match status" value="1"/>
</dbReference>
<dbReference type="HAMAP" id="MF_01371_B">
    <property type="entry name" value="Ribosomal_uL30_B"/>
    <property type="match status" value="1"/>
</dbReference>
<dbReference type="InterPro" id="IPR036919">
    <property type="entry name" value="Ribo_uL30_ferredoxin-like_sf"/>
</dbReference>
<dbReference type="InterPro" id="IPR005996">
    <property type="entry name" value="Ribosomal_uL30_bac-type"/>
</dbReference>
<dbReference type="InterPro" id="IPR016082">
    <property type="entry name" value="Ribosomal_uL30_ferredoxin-like"/>
</dbReference>
<dbReference type="NCBIfam" id="TIGR01308">
    <property type="entry name" value="rpmD_bact"/>
    <property type="match status" value="1"/>
</dbReference>
<dbReference type="PANTHER" id="PTHR15892:SF2">
    <property type="entry name" value="LARGE RIBOSOMAL SUBUNIT PROTEIN UL30M"/>
    <property type="match status" value="1"/>
</dbReference>
<dbReference type="PANTHER" id="PTHR15892">
    <property type="entry name" value="MITOCHONDRIAL RIBOSOMAL PROTEIN L30"/>
    <property type="match status" value="1"/>
</dbReference>
<dbReference type="Pfam" id="PF00327">
    <property type="entry name" value="Ribosomal_L30"/>
    <property type="match status" value="1"/>
</dbReference>
<dbReference type="PIRSF" id="PIRSF002211">
    <property type="entry name" value="Ribosomal_L30_bac-type"/>
    <property type="match status" value="1"/>
</dbReference>
<dbReference type="SUPFAM" id="SSF55129">
    <property type="entry name" value="Ribosomal protein L30p/L7e"/>
    <property type="match status" value="1"/>
</dbReference>
<protein>
    <recommendedName>
        <fullName evidence="1">Large ribosomal subunit protein uL30</fullName>
    </recommendedName>
    <alternativeName>
        <fullName evidence="2">50S ribosomal protein L30</fullName>
    </alternativeName>
</protein>
<feature type="chain" id="PRO_1000056052" description="Large ribosomal subunit protein uL30">
    <location>
        <begin position="1"/>
        <end position="60"/>
    </location>
</feature>
<accession>Q03PX5</accession>
<evidence type="ECO:0000255" key="1">
    <source>
        <dbReference type="HAMAP-Rule" id="MF_01371"/>
    </source>
</evidence>
<evidence type="ECO:0000305" key="2"/>
<proteinExistence type="inferred from homology"/>
<sequence>MAQLKVTLIHSAAHRLPKQRKIVEALGLKRVNSSVLQPDNEATRGALFQIAHLIKVEEVK</sequence>
<name>RL30_LEVBA</name>
<comment type="subunit">
    <text evidence="1">Part of the 50S ribosomal subunit.</text>
</comment>
<comment type="similarity">
    <text evidence="1">Belongs to the universal ribosomal protein uL30 family.</text>
</comment>
<organism>
    <name type="scientific">Levilactobacillus brevis (strain ATCC 367 / BCRC 12310 / CIP 105137 / JCM 1170 / LMG 11437 / NCIMB 947 / NCTC 947)</name>
    <name type="common">Lactobacillus brevis</name>
    <dbReference type="NCBI Taxonomy" id="387344"/>
    <lineage>
        <taxon>Bacteria</taxon>
        <taxon>Bacillati</taxon>
        <taxon>Bacillota</taxon>
        <taxon>Bacilli</taxon>
        <taxon>Lactobacillales</taxon>
        <taxon>Lactobacillaceae</taxon>
        <taxon>Levilactobacillus</taxon>
    </lineage>
</organism>
<keyword id="KW-1185">Reference proteome</keyword>
<keyword id="KW-0687">Ribonucleoprotein</keyword>
<keyword id="KW-0689">Ribosomal protein</keyword>
<reference key="1">
    <citation type="journal article" date="2006" name="Proc. Natl. Acad. Sci. U.S.A.">
        <title>Comparative genomics of the lactic acid bacteria.</title>
        <authorList>
            <person name="Makarova K.S."/>
            <person name="Slesarev A."/>
            <person name="Wolf Y.I."/>
            <person name="Sorokin A."/>
            <person name="Mirkin B."/>
            <person name="Koonin E.V."/>
            <person name="Pavlov A."/>
            <person name="Pavlova N."/>
            <person name="Karamychev V."/>
            <person name="Polouchine N."/>
            <person name="Shakhova V."/>
            <person name="Grigoriev I."/>
            <person name="Lou Y."/>
            <person name="Rohksar D."/>
            <person name="Lucas S."/>
            <person name="Huang K."/>
            <person name="Goodstein D.M."/>
            <person name="Hawkins T."/>
            <person name="Plengvidhya V."/>
            <person name="Welker D."/>
            <person name="Hughes J."/>
            <person name="Goh Y."/>
            <person name="Benson A."/>
            <person name="Baldwin K."/>
            <person name="Lee J.-H."/>
            <person name="Diaz-Muniz I."/>
            <person name="Dosti B."/>
            <person name="Smeianov V."/>
            <person name="Wechter W."/>
            <person name="Barabote R."/>
            <person name="Lorca G."/>
            <person name="Altermann E."/>
            <person name="Barrangou R."/>
            <person name="Ganesan B."/>
            <person name="Xie Y."/>
            <person name="Rawsthorne H."/>
            <person name="Tamir D."/>
            <person name="Parker C."/>
            <person name="Breidt F."/>
            <person name="Broadbent J.R."/>
            <person name="Hutkins R."/>
            <person name="O'Sullivan D."/>
            <person name="Steele J."/>
            <person name="Unlu G."/>
            <person name="Saier M.H. Jr."/>
            <person name="Klaenhammer T."/>
            <person name="Richardson P."/>
            <person name="Kozyavkin S."/>
            <person name="Weimer B.C."/>
            <person name="Mills D.A."/>
        </authorList>
    </citation>
    <scope>NUCLEOTIDE SEQUENCE [LARGE SCALE GENOMIC DNA]</scope>
    <source>
        <strain>ATCC 367 / BCRC 12310 / CIP 105137 / JCM 1170 / LMG 11437 / NCIMB 947 / NCTC 947</strain>
    </source>
</reference>
<gene>
    <name evidence="1" type="primary">rpmD</name>
    <name type="ordered locus">LVIS_1672</name>
</gene>